<keyword id="KW-0238">DNA-binding</keyword>
<keyword id="KW-0539">Nucleus</keyword>
<keyword id="KW-1185">Reference proteome</keyword>
<keyword id="KW-0804">Transcription</keyword>
<keyword id="KW-0805">Transcription regulation</keyword>
<sequence>MSSSLPILPKSLKDIPRSHNTQNILMPGQLPNDSMPLHQSATQSSISHPRASVVRSSYSAMLGYAANPIDSVSSHEGHFMAAPFISQSSNAEMLQSLCNNNTHGGHTVPTFFPAPACGAPDYMDTITVPDNHTQSGSSTVTSDAAKQNEWWADIMNDDWKDILDATATDSQSKSMAQPSNSAASQPAFNQSTSSHSGDICPVTSPPPNNSNASASKQRMRWTPELHESFVHAVNKLGGSEKATPKGVLKLMKVDGLTIYHVKSHLQKYRTARYKPDLSEGKTQEGKTTDELSLDLKASMDLTEALRLQMEVQKRLHEQLEIQRKLQLRIEEQGKYLQKMFEKQCKSSTQSVQDPSSGDTATPSEPSNSVDKDSEAALDPNRIGDNHPKNSTNVGANLKTAATESPDSPVIATDGSELPQEKRRRVHES</sequence>
<accession>B8ANX9</accession>
<proteinExistence type="inferred from homology"/>
<reference key="1">
    <citation type="journal article" date="2005" name="PLoS Biol.">
        <title>The genomes of Oryza sativa: a history of duplications.</title>
        <authorList>
            <person name="Yu J."/>
            <person name="Wang J."/>
            <person name="Lin W."/>
            <person name="Li S."/>
            <person name="Li H."/>
            <person name="Zhou J."/>
            <person name="Ni P."/>
            <person name="Dong W."/>
            <person name="Hu S."/>
            <person name="Zeng C."/>
            <person name="Zhang J."/>
            <person name="Zhang Y."/>
            <person name="Li R."/>
            <person name="Xu Z."/>
            <person name="Li S."/>
            <person name="Li X."/>
            <person name="Zheng H."/>
            <person name="Cong L."/>
            <person name="Lin L."/>
            <person name="Yin J."/>
            <person name="Geng J."/>
            <person name="Li G."/>
            <person name="Shi J."/>
            <person name="Liu J."/>
            <person name="Lv H."/>
            <person name="Li J."/>
            <person name="Wang J."/>
            <person name="Deng Y."/>
            <person name="Ran L."/>
            <person name="Shi X."/>
            <person name="Wang X."/>
            <person name="Wu Q."/>
            <person name="Li C."/>
            <person name="Ren X."/>
            <person name="Wang J."/>
            <person name="Wang X."/>
            <person name="Li D."/>
            <person name="Liu D."/>
            <person name="Zhang X."/>
            <person name="Ji Z."/>
            <person name="Zhao W."/>
            <person name="Sun Y."/>
            <person name="Zhang Z."/>
            <person name="Bao J."/>
            <person name="Han Y."/>
            <person name="Dong L."/>
            <person name="Ji J."/>
            <person name="Chen P."/>
            <person name="Wu S."/>
            <person name="Liu J."/>
            <person name="Xiao Y."/>
            <person name="Bu D."/>
            <person name="Tan J."/>
            <person name="Yang L."/>
            <person name="Ye C."/>
            <person name="Zhang J."/>
            <person name="Xu J."/>
            <person name="Zhou Y."/>
            <person name="Yu Y."/>
            <person name="Zhang B."/>
            <person name="Zhuang S."/>
            <person name="Wei H."/>
            <person name="Liu B."/>
            <person name="Lei M."/>
            <person name="Yu H."/>
            <person name="Li Y."/>
            <person name="Xu H."/>
            <person name="Wei S."/>
            <person name="He X."/>
            <person name="Fang L."/>
            <person name="Zhang Z."/>
            <person name="Zhang Y."/>
            <person name="Huang X."/>
            <person name="Su Z."/>
            <person name="Tong W."/>
            <person name="Li J."/>
            <person name="Tong Z."/>
            <person name="Li S."/>
            <person name="Ye J."/>
            <person name="Wang L."/>
            <person name="Fang L."/>
            <person name="Lei T."/>
            <person name="Chen C.-S."/>
            <person name="Chen H.-C."/>
            <person name="Xu Z."/>
            <person name="Li H."/>
            <person name="Huang H."/>
            <person name="Zhang F."/>
            <person name="Xu H."/>
            <person name="Li N."/>
            <person name="Zhao C."/>
            <person name="Li S."/>
            <person name="Dong L."/>
            <person name="Huang Y."/>
            <person name="Li L."/>
            <person name="Xi Y."/>
            <person name="Qi Q."/>
            <person name="Li W."/>
            <person name="Zhang B."/>
            <person name="Hu W."/>
            <person name="Zhang Y."/>
            <person name="Tian X."/>
            <person name="Jiao Y."/>
            <person name="Liang X."/>
            <person name="Jin J."/>
            <person name="Gao L."/>
            <person name="Zheng W."/>
            <person name="Hao B."/>
            <person name="Liu S.-M."/>
            <person name="Wang W."/>
            <person name="Yuan L."/>
            <person name="Cao M."/>
            <person name="McDermott J."/>
            <person name="Samudrala R."/>
            <person name="Wang J."/>
            <person name="Wong G.K.-S."/>
            <person name="Yang H."/>
        </authorList>
    </citation>
    <scope>NUCLEOTIDE SEQUENCE [LARGE SCALE GENOMIC DNA]</scope>
    <source>
        <strain>cv. 93-11</strain>
    </source>
</reference>
<comment type="function">
    <text evidence="1">Transcription factor involved in phosphate starvation signaling. Binds to P1BS, an imperfect palindromic sequence 5'-GNATATNC-3', to promote the expression of inorganic phosphate (Pi) starvation-responsive genes. Functionally redundant with PHR2 and PHR3 in regulating Pi starvation response and Pi homeostasis.</text>
</comment>
<comment type="subcellular location">
    <subcellularLocation>
        <location evidence="2">Nucleus</location>
    </subcellularLocation>
</comment>
<gene>
    <name evidence="1" type="primary">PHR1</name>
    <name evidence="4" type="ORF">OsI_11411</name>
</gene>
<organism evidence="5">
    <name type="scientific">Oryza sativa subsp. indica</name>
    <name type="common">Rice</name>
    <dbReference type="NCBI Taxonomy" id="39946"/>
    <lineage>
        <taxon>Eukaryota</taxon>
        <taxon>Viridiplantae</taxon>
        <taxon>Streptophyta</taxon>
        <taxon>Embryophyta</taxon>
        <taxon>Tracheophyta</taxon>
        <taxon>Spermatophyta</taxon>
        <taxon>Magnoliopsida</taxon>
        <taxon>Liliopsida</taxon>
        <taxon>Poales</taxon>
        <taxon>Poaceae</taxon>
        <taxon>BOP clade</taxon>
        <taxon>Oryzoideae</taxon>
        <taxon>Oryzeae</taxon>
        <taxon>Oryzinae</taxon>
        <taxon>Oryza</taxon>
        <taxon>Oryza sativa</taxon>
    </lineage>
</organism>
<name>PHR1_ORYSI</name>
<evidence type="ECO:0000250" key="1">
    <source>
        <dbReference type="UniProtKB" id="Q10LZ1"/>
    </source>
</evidence>
<evidence type="ECO:0000255" key="2">
    <source>
        <dbReference type="PROSITE-ProRule" id="PRU00625"/>
    </source>
</evidence>
<evidence type="ECO:0000256" key="3">
    <source>
        <dbReference type="SAM" id="MobiDB-lite"/>
    </source>
</evidence>
<evidence type="ECO:0000312" key="4">
    <source>
        <dbReference type="EMBL" id="EEC75183.1"/>
    </source>
</evidence>
<evidence type="ECO:0000312" key="5">
    <source>
        <dbReference type="Proteomes" id="UP000007015"/>
    </source>
</evidence>
<dbReference type="EMBL" id="CM000128">
    <property type="protein sequence ID" value="EEC75183.1"/>
    <property type="molecule type" value="Genomic_DNA"/>
</dbReference>
<dbReference type="SMR" id="B8ANX9"/>
<dbReference type="STRING" id="39946.B8ANX9"/>
<dbReference type="EnsemblPlants" id="BGIOSGA012553-TA">
    <property type="protein sequence ID" value="BGIOSGA012553-PA"/>
    <property type="gene ID" value="BGIOSGA012553"/>
</dbReference>
<dbReference type="EnsemblPlants" id="OsIR64_03g0015960.01">
    <property type="protein sequence ID" value="OsIR64_03g0015960.01"/>
    <property type="gene ID" value="OsIR64_03g0015960"/>
</dbReference>
<dbReference type="EnsemblPlants" id="OsKYG_03g0016230.01">
    <property type="protein sequence ID" value="OsKYG_03g0016230.01"/>
    <property type="gene ID" value="OsKYG_03g0016230"/>
</dbReference>
<dbReference type="EnsemblPlants" id="OsLaMu_03g0016070.01">
    <property type="protein sequence ID" value="OsLaMu_03g0016070.01"/>
    <property type="gene ID" value="OsLaMu_03g0016070"/>
</dbReference>
<dbReference type="EnsemblPlants" id="OsLima_03g0016220.01">
    <property type="protein sequence ID" value="OsLima_03g0016220.01"/>
    <property type="gene ID" value="OsLima_03g0016220"/>
</dbReference>
<dbReference type="EnsemblPlants" id="OsLiXu_03g0016150.01">
    <property type="protein sequence ID" value="OsLiXu_03g0016150.01"/>
    <property type="gene ID" value="OsLiXu_03g0016150"/>
</dbReference>
<dbReference type="EnsemblPlants" id="OsMH63_03G016200_01">
    <property type="protein sequence ID" value="OsMH63_03G016200_01"/>
    <property type="gene ID" value="OsMH63_03G016200"/>
</dbReference>
<dbReference type="EnsemblPlants" id="OsPr106_03g0016080.01">
    <property type="protein sequence ID" value="OsPr106_03g0016080.01"/>
    <property type="gene ID" value="OsPr106_03g0016080"/>
</dbReference>
<dbReference type="EnsemblPlants" id="OsZS97_03G016130_01">
    <property type="protein sequence ID" value="OsZS97_03G016130_01"/>
    <property type="gene ID" value="OsZS97_03G016130"/>
</dbReference>
<dbReference type="Gramene" id="BGIOSGA012553-TA">
    <property type="protein sequence ID" value="BGIOSGA012553-PA"/>
    <property type="gene ID" value="BGIOSGA012553"/>
</dbReference>
<dbReference type="Gramene" id="OsIR64_03g0015960.01">
    <property type="protein sequence ID" value="OsIR64_03g0015960.01"/>
    <property type="gene ID" value="OsIR64_03g0015960"/>
</dbReference>
<dbReference type="Gramene" id="OsKYG_03g0016230.01">
    <property type="protein sequence ID" value="OsKYG_03g0016230.01"/>
    <property type="gene ID" value="OsKYG_03g0016230"/>
</dbReference>
<dbReference type="Gramene" id="OsLaMu_03g0016070.01">
    <property type="protein sequence ID" value="OsLaMu_03g0016070.01"/>
    <property type="gene ID" value="OsLaMu_03g0016070"/>
</dbReference>
<dbReference type="Gramene" id="OsLima_03g0016220.01">
    <property type="protein sequence ID" value="OsLima_03g0016220.01"/>
    <property type="gene ID" value="OsLima_03g0016220"/>
</dbReference>
<dbReference type="Gramene" id="OsLiXu_03g0016150.01">
    <property type="protein sequence ID" value="OsLiXu_03g0016150.01"/>
    <property type="gene ID" value="OsLiXu_03g0016150"/>
</dbReference>
<dbReference type="Gramene" id="OsMH63_03G016200_01">
    <property type="protein sequence ID" value="OsMH63_03G016200_01"/>
    <property type="gene ID" value="OsMH63_03G016200"/>
</dbReference>
<dbReference type="Gramene" id="OsPr106_03g0016080.01">
    <property type="protein sequence ID" value="OsPr106_03g0016080.01"/>
    <property type="gene ID" value="OsPr106_03g0016080"/>
</dbReference>
<dbReference type="Gramene" id="OsZS97_03G016130_01">
    <property type="protein sequence ID" value="OsZS97_03G016130_01"/>
    <property type="gene ID" value="OsZS97_03G016130"/>
</dbReference>
<dbReference type="HOGENOM" id="CLU_044541_0_0_1"/>
<dbReference type="OMA" id="SDWPEWA"/>
<dbReference type="Proteomes" id="UP000007015">
    <property type="component" value="Chromosome 3"/>
</dbReference>
<dbReference type="GO" id="GO:0005634">
    <property type="term" value="C:nucleus"/>
    <property type="evidence" value="ECO:0007669"/>
    <property type="project" value="UniProtKB-SubCell"/>
</dbReference>
<dbReference type="GO" id="GO:0003677">
    <property type="term" value="F:DNA binding"/>
    <property type="evidence" value="ECO:0007669"/>
    <property type="project" value="UniProtKB-KW"/>
</dbReference>
<dbReference type="GO" id="GO:0003700">
    <property type="term" value="F:DNA-binding transcription factor activity"/>
    <property type="evidence" value="ECO:0007669"/>
    <property type="project" value="InterPro"/>
</dbReference>
<dbReference type="FunFam" id="1.10.10.60:FF:000002">
    <property type="entry name" value="Myb family transcription factor"/>
    <property type="match status" value="1"/>
</dbReference>
<dbReference type="Gene3D" id="1.10.10.60">
    <property type="entry name" value="Homeodomain-like"/>
    <property type="match status" value="1"/>
</dbReference>
<dbReference type="InterPro" id="IPR009057">
    <property type="entry name" value="Homeodomain-like_sf"/>
</dbReference>
<dbReference type="InterPro" id="IPR025756">
    <property type="entry name" value="Myb_CC_LHEQLE"/>
</dbReference>
<dbReference type="InterPro" id="IPR017930">
    <property type="entry name" value="Myb_dom"/>
</dbReference>
<dbReference type="InterPro" id="IPR006447">
    <property type="entry name" value="Myb_dom_plants"/>
</dbReference>
<dbReference type="InterPro" id="IPR046955">
    <property type="entry name" value="PHR1-like"/>
</dbReference>
<dbReference type="InterPro" id="IPR001005">
    <property type="entry name" value="SANT/Myb"/>
</dbReference>
<dbReference type="NCBIfam" id="TIGR01557">
    <property type="entry name" value="myb_SHAQKYF"/>
    <property type="match status" value="1"/>
</dbReference>
<dbReference type="PANTHER" id="PTHR31499:SF80">
    <property type="entry name" value="HTH MYB-TYPE DOMAIN-CONTAINING PROTEIN"/>
    <property type="match status" value="1"/>
</dbReference>
<dbReference type="PANTHER" id="PTHR31499">
    <property type="entry name" value="MYB FAMILY TRANSCRIPTION FACTOR PHL11"/>
    <property type="match status" value="1"/>
</dbReference>
<dbReference type="Pfam" id="PF14379">
    <property type="entry name" value="Myb_CC_LHEQLE"/>
    <property type="match status" value="1"/>
</dbReference>
<dbReference type="Pfam" id="PF00249">
    <property type="entry name" value="Myb_DNA-binding"/>
    <property type="match status" value="1"/>
</dbReference>
<dbReference type="SUPFAM" id="SSF46689">
    <property type="entry name" value="Homeodomain-like"/>
    <property type="match status" value="1"/>
</dbReference>
<dbReference type="PROSITE" id="PS51294">
    <property type="entry name" value="HTH_MYB"/>
    <property type="match status" value="1"/>
</dbReference>
<protein>
    <recommendedName>
        <fullName evidence="1">Protein PHOSPHATE STARVATION RESPONSE 1</fullName>
        <shortName evidence="1">OsPHR1</shortName>
    </recommendedName>
</protein>
<feature type="chain" id="PRO_0000436717" description="Protein PHOSPHATE STARVATION RESPONSE 1">
    <location>
        <begin position="1"/>
        <end position="428"/>
    </location>
</feature>
<feature type="domain" description="HTH myb-type" evidence="2">
    <location>
        <begin position="213"/>
        <end position="273"/>
    </location>
</feature>
<feature type="DNA-binding region" description="H-T-H motif" evidence="2">
    <location>
        <begin position="244"/>
        <end position="269"/>
    </location>
</feature>
<feature type="region of interest" description="Disordered" evidence="3">
    <location>
        <begin position="1"/>
        <end position="32"/>
    </location>
</feature>
<feature type="region of interest" description="Disordered" evidence="3">
    <location>
        <begin position="168"/>
        <end position="219"/>
    </location>
</feature>
<feature type="region of interest" description="Disordered" evidence="3">
    <location>
        <begin position="345"/>
        <end position="428"/>
    </location>
</feature>
<feature type="compositionally biased region" description="Low complexity" evidence="3">
    <location>
        <begin position="1"/>
        <end position="10"/>
    </location>
</feature>
<feature type="compositionally biased region" description="Low complexity" evidence="3">
    <location>
        <begin position="176"/>
        <end position="191"/>
    </location>
</feature>
<feature type="compositionally biased region" description="Polar residues" evidence="3">
    <location>
        <begin position="345"/>
        <end position="368"/>
    </location>
</feature>
<feature type="compositionally biased region" description="Polar residues" evidence="3">
    <location>
        <begin position="388"/>
        <end position="405"/>
    </location>
</feature>